<protein>
    <recommendedName>
        <fullName>Toxin Cn1</fullName>
    </recommendedName>
    <alternativeName>
        <fullName evidence="5">Toxin II.14</fullName>
        <shortName>Toxin 1</shortName>
    </alternativeName>
</protein>
<evidence type="ECO:0000250" key="1"/>
<evidence type="ECO:0000255" key="2">
    <source>
        <dbReference type="PROSITE-ProRule" id="PRU01210"/>
    </source>
</evidence>
<evidence type="ECO:0000269" key="3">
    <source>
    </source>
</evidence>
<evidence type="ECO:0000269" key="4">
    <source>
    </source>
</evidence>
<evidence type="ECO:0000303" key="5">
    <source>
    </source>
</evidence>
<evidence type="ECO:0000305" key="6"/>
<evidence type="ECO:0000305" key="7">
    <source>
    </source>
</evidence>
<name>SCX1_CENNO</name>
<dbReference type="EMBL" id="S81093">
    <property type="protein sequence ID" value="AAB36085.2"/>
    <property type="molecule type" value="mRNA"/>
</dbReference>
<dbReference type="EMBL" id="AY351298">
    <property type="protein sequence ID" value="AAR08033.1"/>
    <property type="molecule type" value="Genomic_DNA"/>
</dbReference>
<dbReference type="PIR" id="S32789">
    <property type="entry name" value="S32789"/>
</dbReference>
<dbReference type="SMR" id="P15223"/>
<dbReference type="GO" id="GO:0005576">
    <property type="term" value="C:extracellular region"/>
    <property type="evidence" value="ECO:0007669"/>
    <property type="project" value="UniProtKB-SubCell"/>
</dbReference>
<dbReference type="GO" id="GO:0019871">
    <property type="term" value="F:sodium channel inhibitor activity"/>
    <property type="evidence" value="ECO:0007669"/>
    <property type="project" value="InterPro"/>
</dbReference>
<dbReference type="GO" id="GO:0090729">
    <property type="term" value="F:toxin activity"/>
    <property type="evidence" value="ECO:0007669"/>
    <property type="project" value="UniProtKB-KW"/>
</dbReference>
<dbReference type="GO" id="GO:0006952">
    <property type="term" value="P:defense response"/>
    <property type="evidence" value="ECO:0007669"/>
    <property type="project" value="InterPro"/>
</dbReference>
<dbReference type="CDD" id="cd23106">
    <property type="entry name" value="neurotoxins_LC_scorpion"/>
    <property type="match status" value="1"/>
</dbReference>
<dbReference type="FunFam" id="3.30.30.10:FF:000002">
    <property type="entry name" value="Alpha-like toxin BmK-M1"/>
    <property type="match status" value="1"/>
</dbReference>
<dbReference type="Gene3D" id="3.30.30.10">
    <property type="entry name" value="Knottin, scorpion toxin-like"/>
    <property type="match status" value="1"/>
</dbReference>
<dbReference type="InterPro" id="IPR044062">
    <property type="entry name" value="LCN-type_CS_alpha_beta_dom"/>
</dbReference>
<dbReference type="InterPro" id="IPR003614">
    <property type="entry name" value="Scorpion_toxin-like"/>
</dbReference>
<dbReference type="InterPro" id="IPR036574">
    <property type="entry name" value="Scorpion_toxin-like_sf"/>
</dbReference>
<dbReference type="InterPro" id="IPR018218">
    <property type="entry name" value="Scorpion_toxinL"/>
</dbReference>
<dbReference type="InterPro" id="IPR002061">
    <property type="entry name" value="Scorpion_toxinL/defensin"/>
</dbReference>
<dbReference type="Pfam" id="PF00537">
    <property type="entry name" value="Toxin_3"/>
    <property type="match status" value="1"/>
</dbReference>
<dbReference type="PRINTS" id="PR00285">
    <property type="entry name" value="SCORPNTOXIN"/>
</dbReference>
<dbReference type="PRINTS" id="PR00284">
    <property type="entry name" value="TOXIN"/>
</dbReference>
<dbReference type="SMART" id="SM00505">
    <property type="entry name" value="Knot1"/>
    <property type="match status" value="1"/>
</dbReference>
<dbReference type="SUPFAM" id="SSF57095">
    <property type="entry name" value="Scorpion toxin-like"/>
    <property type="match status" value="1"/>
</dbReference>
<dbReference type="PROSITE" id="PS51863">
    <property type="entry name" value="LCN_CSAB"/>
    <property type="match status" value="1"/>
</dbReference>
<comment type="function">
    <text evidence="1">Beta toxins bind voltage-independently at site-4 of sodium channels (Nav) and shift the voltage of activation toward more negative potentials thereby affecting sodium channel activation and promoting spontaneous and repetitive firing.</text>
</comment>
<comment type="subcellular location">
    <subcellularLocation>
        <location evidence="3">Secreted</location>
    </subcellularLocation>
</comment>
<comment type="tissue specificity">
    <text evidence="7">Expressed by the venom gland.</text>
</comment>
<comment type="domain">
    <text evidence="6">Has the structural arrangement of an alpha-helix connected to antiparallel beta-sheets by disulfide bonds (CS-alpha/beta).</text>
</comment>
<comment type="similarity">
    <text evidence="6">Belongs to the long (4 C-C) scorpion toxin superfamily. Sodium channel inhibitor family. Beta subfamily.</text>
</comment>
<proteinExistence type="evidence at protein level"/>
<reference key="1">
    <citation type="journal article" date="1995" name="Toxicon">
        <title>Cloning and characterization of the cDNAs encoding Na+ channel-specific toxins 1 and 2 of the scorpion Centruroides noxius Hoffmann.</title>
        <authorList>
            <person name="Vazquez A."/>
            <person name="Tapia J.V."/>
            <person name="Eliason W.K."/>
            <person name="Martin B.M."/>
            <person name="Lebreton F."/>
            <person name="Delepierre M."/>
            <person name="Possani L.D."/>
            <person name="Becerril B."/>
        </authorList>
    </citation>
    <scope>NUCLEOTIDE SEQUENCE [MRNA]</scope>
    <scope>AMIDATION AT SER-84</scope>
    <source>
        <tissue>Venom gland</tissue>
    </source>
</reference>
<reference key="2">
    <citation type="submission" date="2003-07" db="EMBL/GenBank/DDBJ databases">
        <title>Alignment of beta-toxin nucleotide sequences.</title>
        <authorList>
            <person name="Zhu S."/>
        </authorList>
    </citation>
    <scope>NUCLEOTIDE SEQUENCE [GENOMIC DNA] OF 20-83</scope>
</reference>
<reference key="3">
    <citation type="journal article" date="1985" name="Biochem. J.">
        <title>Scorpion toxins from Centruroides noxius and Tityus serrulatus. Primary structures and sequence comparison by metric analysis.</title>
        <authorList>
            <person name="Possani L.D."/>
            <person name="Martin B.M."/>
            <person name="Svendsen I."/>
            <person name="Rode G.S."/>
            <person name="Erickson B.W."/>
        </authorList>
    </citation>
    <scope>PROTEIN SEQUENCE OF 20-84</scope>
    <scope>SUBCELLULAR LOCATION</scope>
    <source>
        <tissue>Venom</tissue>
    </source>
</reference>
<feature type="signal peptide" evidence="3">
    <location>
        <begin position="1"/>
        <end position="19"/>
    </location>
</feature>
<feature type="chain" id="PRO_0000035279" description="Toxin Cn1" evidence="3">
    <location>
        <begin position="20"/>
        <end position="84"/>
    </location>
</feature>
<feature type="domain" description="LCN-type CS-alpha/beta" evidence="2">
    <location>
        <begin position="20"/>
        <end position="84"/>
    </location>
</feature>
<feature type="modified residue" description="Serine amide" evidence="4">
    <location>
        <position position="84"/>
    </location>
</feature>
<feature type="disulfide bond" evidence="2">
    <location>
        <begin position="30"/>
        <end position="83"/>
    </location>
</feature>
<feature type="disulfide bond" evidence="2">
    <location>
        <begin position="34"/>
        <end position="59"/>
    </location>
</feature>
<feature type="disulfide bond" evidence="2">
    <location>
        <begin position="43"/>
        <end position="64"/>
    </location>
</feature>
<feature type="disulfide bond" evidence="2">
    <location>
        <begin position="47"/>
        <end position="66"/>
    </location>
</feature>
<feature type="sequence conflict" description="In Ref. 3; AA sequence." evidence="6" ref="3">
    <original>P</original>
    <variation>T</variation>
    <location>
        <position position="79"/>
    </location>
</feature>
<keyword id="KW-0027">Amidation</keyword>
<keyword id="KW-0903">Direct protein sequencing</keyword>
<keyword id="KW-1015">Disulfide bond</keyword>
<keyword id="KW-0872">Ion channel impairing toxin</keyword>
<keyword id="KW-0528">Neurotoxin</keyword>
<keyword id="KW-0964">Secreted</keyword>
<keyword id="KW-0732">Signal</keyword>
<keyword id="KW-0800">Toxin</keyword>
<keyword id="KW-0738">Voltage-gated sodium channel impairing toxin</keyword>
<sequence>MNSLLMITACFVLIGTVWAKDGYLVDAKGCKKNCYKLGKNDYCNRECRMKHRGGSYGYCYGFGCYCEGLSDSTPTWPLPNKTCSGK</sequence>
<organism>
    <name type="scientific">Centruroides noxius</name>
    <name type="common">Mexican scorpion</name>
    <dbReference type="NCBI Taxonomy" id="6878"/>
    <lineage>
        <taxon>Eukaryota</taxon>
        <taxon>Metazoa</taxon>
        <taxon>Ecdysozoa</taxon>
        <taxon>Arthropoda</taxon>
        <taxon>Chelicerata</taxon>
        <taxon>Arachnida</taxon>
        <taxon>Scorpiones</taxon>
        <taxon>Buthida</taxon>
        <taxon>Buthoidea</taxon>
        <taxon>Buthidae</taxon>
        <taxon>Centruroides</taxon>
    </lineage>
</organism>
<accession>P15223</accession>
<accession>Q26460</accession>
<accession>Q6V4Z2</accession>